<accession>P38937</accession>
<gene>
    <name evidence="5" type="primary">cut8</name>
    <name evidence="7" type="ORF">SPAC17C9.13c</name>
</gene>
<feature type="chain" id="PRO_0000079568" description="Tethering factor for nuclear proteasome cut8">
    <location>
        <begin position="1"/>
        <end position="262"/>
    </location>
</feature>
<feature type="helix" evidence="8">
    <location>
        <begin position="35"/>
        <end position="38"/>
    </location>
</feature>
<feature type="helix" evidence="8">
    <location>
        <begin position="44"/>
        <end position="57"/>
    </location>
</feature>
<feature type="helix" evidence="8">
    <location>
        <begin position="60"/>
        <end position="66"/>
    </location>
</feature>
<feature type="helix" evidence="8">
    <location>
        <begin position="74"/>
        <end position="90"/>
    </location>
</feature>
<feature type="strand" evidence="8">
    <location>
        <begin position="94"/>
        <end position="96"/>
    </location>
</feature>
<feature type="helix" evidence="8">
    <location>
        <begin position="101"/>
        <end position="121"/>
    </location>
</feature>
<feature type="helix" evidence="8">
    <location>
        <begin position="122"/>
        <end position="125"/>
    </location>
</feature>
<feature type="turn" evidence="9">
    <location>
        <begin position="127"/>
        <end position="129"/>
    </location>
</feature>
<feature type="helix" evidence="8">
    <location>
        <begin position="133"/>
        <end position="148"/>
    </location>
</feature>
<feature type="strand" evidence="8">
    <location>
        <begin position="154"/>
        <end position="156"/>
    </location>
</feature>
<feature type="helix" evidence="8">
    <location>
        <begin position="157"/>
        <end position="159"/>
    </location>
</feature>
<feature type="helix" evidence="8">
    <location>
        <begin position="160"/>
        <end position="178"/>
    </location>
</feature>
<feature type="strand" evidence="8">
    <location>
        <begin position="181"/>
        <end position="185"/>
    </location>
</feature>
<feature type="helix" evidence="8">
    <location>
        <begin position="191"/>
        <end position="200"/>
    </location>
</feature>
<feature type="turn" evidence="8">
    <location>
        <begin position="201"/>
        <end position="205"/>
    </location>
</feature>
<feature type="helix" evidence="8">
    <location>
        <begin position="206"/>
        <end position="215"/>
    </location>
</feature>
<evidence type="ECO:0000269" key="1">
    <source>
    </source>
</evidence>
<evidence type="ECO:0000269" key="2">
    <source>
    </source>
</evidence>
<evidence type="ECO:0000269" key="3">
    <source>
    </source>
</evidence>
<evidence type="ECO:0000269" key="4">
    <source>
    </source>
</evidence>
<evidence type="ECO:0000303" key="5">
    <source>
    </source>
</evidence>
<evidence type="ECO:0000305" key="6"/>
<evidence type="ECO:0000312" key="7">
    <source>
        <dbReference type="PomBase" id="SPAC17C9.13c"/>
    </source>
</evidence>
<evidence type="ECO:0007829" key="8">
    <source>
        <dbReference type="PDB" id="3Q5W"/>
    </source>
</evidence>
<evidence type="ECO:0007829" key="9">
    <source>
        <dbReference type="PDB" id="3Q5X"/>
    </source>
</evidence>
<comment type="function">
    <text evidence="1 2 3 4">Together with nucleoporin alm1, tethers the proteasome to the nuclear envelope (PubMed:11084332, PubMed:16096059, PubMed:28974540). Involved in ubiquitin-mediated protein degradation and facilitates the degradation of nuclear proteins like mitotic cyclin and cut2 (PubMed:11084332, PubMed:16096059). Required for normal progression of anaphase (PubMed:11084332, PubMed:8065367).</text>
</comment>
<comment type="subunit">
    <text evidence="2">Binds the proteasome.</text>
</comment>
<comment type="interaction">
    <interactant intactId="EBI-1152591">
        <id>P38937</id>
    </interactant>
    <interactant intactId="EBI-1152591">
        <id>P38937</id>
        <label>cut8</label>
    </interactant>
    <organismsDiffer>false</organismsDiffer>
    <experiments>3</experiments>
</comment>
<comment type="interaction">
    <interactant intactId="EBI-1152591">
        <id>P38937</id>
    </interactant>
    <interactant intactId="EBI-1152810">
        <id>P87048</id>
        <label>rpn1</label>
    </interactant>
    <organismsDiffer>false</organismsDiffer>
    <experiments>4</experiments>
</comment>
<comment type="interaction">
    <interactant intactId="EBI-1152591">
        <id>P38937</id>
    </interactant>
    <interactant intactId="EBI-1152607">
        <id>P50524</id>
        <label>rpn12</label>
    </interactant>
    <organismsDiffer>false</organismsDiffer>
    <experiments>2</experiments>
</comment>
<comment type="interaction">
    <interactant intactId="EBI-1152591">
        <id>P38937</id>
    </interactant>
    <interactant intactId="EBI-13980">
        <id>P40303</id>
        <label>PRE6</label>
    </interactant>
    <organismsDiffer>true</organismsDiffer>
    <experiments>2</experiments>
</comment>
<comment type="subcellular location">
    <subcellularLocation>
        <location evidence="1 3">Nucleus envelope</location>
    </subcellularLocation>
</comment>
<comment type="PTM">
    <text evidence="2">The N-terminal part (residues 1 to 72) is polyubiquitinated by rhp6, which is required for the interaction with the proteasome.</text>
</comment>
<comment type="similarity">
    <text evidence="6">Belongs to the cut8/STS1 family.</text>
</comment>
<organism>
    <name type="scientific">Schizosaccharomyces pombe (strain 972 / ATCC 24843)</name>
    <name type="common">Fission yeast</name>
    <dbReference type="NCBI Taxonomy" id="284812"/>
    <lineage>
        <taxon>Eukaryota</taxon>
        <taxon>Fungi</taxon>
        <taxon>Dikarya</taxon>
        <taxon>Ascomycota</taxon>
        <taxon>Taphrinomycotina</taxon>
        <taxon>Schizosaccharomycetes</taxon>
        <taxon>Schizosaccharomycetales</taxon>
        <taxon>Schizosaccharomycetaceae</taxon>
        <taxon>Schizosaccharomyces</taxon>
    </lineage>
</organism>
<name>CUT8_SCHPO</name>
<sequence length="262" mass="30622">METLSYSQIKKRKADFDEDISKRARQLPVGEQLPLSRLLQYSDKQQLFTILLQCVEKHPDLARDIRGILPAPSMDTCVETLRKLLINLNDSFPYGGDKRGDYAFNRIREKYMAVLHALNDMVPCYLPPYSTCFEKNITFLDAATNVVHELPEFHNPNHNVYKSQAYYELTGAWLVVLRQLEDRPVVPLLPLEELEEHNKTSQNRMEEALNYLKQLQKNEPLVHERSHTFQQTNPQNNFHRHTNSMNIGNDNGMGWHSMHQYI</sequence>
<dbReference type="EMBL" id="D31772">
    <property type="protein sequence ID" value="BAA06550.1"/>
    <property type="molecule type" value="Genomic_DNA"/>
</dbReference>
<dbReference type="EMBL" id="CU329670">
    <property type="protein sequence ID" value="CAA97343.1"/>
    <property type="molecule type" value="Genomic_DNA"/>
</dbReference>
<dbReference type="PIR" id="T11593">
    <property type="entry name" value="T11593"/>
</dbReference>
<dbReference type="RefSeq" id="NP_594593.1">
    <property type="nucleotide sequence ID" value="NM_001020021.2"/>
</dbReference>
<dbReference type="PDB" id="3Q5W">
    <property type="method" value="X-ray"/>
    <property type="resolution" value="2.75 A"/>
    <property type="chains" value="A/B=1-225"/>
</dbReference>
<dbReference type="PDB" id="3Q5X">
    <property type="method" value="X-ray"/>
    <property type="resolution" value="2.98 A"/>
    <property type="chains" value="A=1-225"/>
</dbReference>
<dbReference type="PDBsum" id="3Q5W"/>
<dbReference type="PDBsum" id="3Q5X"/>
<dbReference type="SMR" id="P38937"/>
<dbReference type="BioGRID" id="278659">
    <property type="interactions" value="19"/>
</dbReference>
<dbReference type="DIP" id="DIP-37445N"/>
<dbReference type="FunCoup" id="P38937">
    <property type="interactions" value="30"/>
</dbReference>
<dbReference type="IntAct" id="P38937">
    <property type="interactions" value="5"/>
</dbReference>
<dbReference type="STRING" id="284812.P38937"/>
<dbReference type="iPTMnet" id="P38937"/>
<dbReference type="PaxDb" id="4896-SPAC17C9.13c.1"/>
<dbReference type="EnsemblFungi" id="SPAC17C9.13c.1">
    <property type="protein sequence ID" value="SPAC17C9.13c.1:pep"/>
    <property type="gene ID" value="SPAC17C9.13c"/>
</dbReference>
<dbReference type="GeneID" id="2542184"/>
<dbReference type="KEGG" id="spo:2542184"/>
<dbReference type="PomBase" id="SPAC17C9.13c">
    <property type="gene designation" value="cut8"/>
</dbReference>
<dbReference type="VEuPathDB" id="FungiDB:SPAC17C9.13c"/>
<dbReference type="eggNOG" id="ENOG502RNK4">
    <property type="taxonomic scope" value="Eukaryota"/>
</dbReference>
<dbReference type="HOGENOM" id="CLU_1062295_0_0_1"/>
<dbReference type="InParanoid" id="P38937"/>
<dbReference type="OMA" id="TITQYAN"/>
<dbReference type="PhylomeDB" id="P38937"/>
<dbReference type="EvolutionaryTrace" id="P38937"/>
<dbReference type="PRO" id="PR:P38937"/>
<dbReference type="Proteomes" id="UP000002485">
    <property type="component" value="Chromosome I"/>
</dbReference>
<dbReference type="GO" id="GO:0000785">
    <property type="term" value="C:chromatin"/>
    <property type="evidence" value="ECO:0000314"/>
    <property type="project" value="PomBase"/>
</dbReference>
<dbReference type="GO" id="GO:0005635">
    <property type="term" value="C:nuclear envelope"/>
    <property type="evidence" value="ECO:0000314"/>
    <property type="project" value="PomBase"/>
</dbReference>
<dbReference type="GO" id="GO:0034399">
    <property type="term" value="C:nuclear periphery"/>
    <property type="evidence" value="ECO:0000314"/>
    <property type="project" value="PomBase"/>
</dbReference>
<dbReference type="GO" id="GO:0005634">
    <property type="term" value="C:nucleus"/>
    <property type="evidence" value="ECO:0007005"/>
    <property type="project" value="PomBase"/>
</dbReference>
<dbReference type="GO" id="GO:0042802">
    <property type="term" value="F:identical protein binding"/>
    <property type="evidence" value="ECO:0000353"/>
    <property type="project" value="IntAct"/>
</dbReference>
<dbReference type="GO" id="GO:0070628">
    <property type="term" value="F:proteasome binding"/>
    <property type="evidence" value="ECO:0000318"/>
    <property type="project" value="GO_Central"/>
</dbReference>
<dbReference type="GO" id="GO:0032934">
    <property type="term" value="F:sterol binding"/>
    <property type="evidence" value="ECO:0000314"/>
    <property type="project" value="PomBase"/>
</dbReference>
<dbReference type="GO" id="GO:0071630">
    <property type="term" value="P:nuclear protein quality control by the ubiquitin-proteasome system"/>
    <property type="evidence" value="ECO:0000318"/>
    <property type="project" value="GO_Central"/>
</dbReference>
<dbReference type="GO" id="GO:0031144">
    <property type="term" value="P:proteasome localization"/>
    <property type="evidence" value="ECO:0000318"/>
    <property type="project" value="GO_Central"/>
</dbReference>
<dbReference type="Gene3D" id="1.20.58.1590">
    <property type="entry name" value="Tethering factor for nuclear proteasome Cut8/Sts1"/>
    <property type="match status" value="1"/>
</dbReference>
<dbReference type="InterPro" id="IPR013868">
    <property type="entry name" value="Cut8/Sts1_fam"/>
</dbReference>
<dbReference type="InterPro" id="IPR038422">
    <property type="entry name" value="Cut8/Sts1_sf"/>
</dbReference>
<dbReference type="PANTHER" id="PTHR28032">
    <property type="entry name" value="FI02826P"/>
    <property type="match status" value="1"/>
</dbReference>
<dbReference type="PANTHER" id="PTHR28032:SF1">
    <property type="entry name" value="FI02826P"/>
    <property type="match status" value="1"/>
</dbReference>
<dbReference type="Pfam" id="PF08559">
    <property type="entry name" value="Cut8"/>
    <property type="match status" value="1"/>
</dbReference>
<proteinExistence type="evidence at protein level"/>
<reference key="1">
    <citation type="journal article" date="1994" name="Mol. Cell. Biol.">
        <title>Identification of cut8+ and cek1+, a novel protein kinase gene, which complement a fission yeast mutation that blocks anaphase.</title>
        <authorList>
            <person name="Samejima I."/>
            <person name="Yanagida M."/>
        </authorList>
    </citation>
    <scope>NUCLEOTIDE SEQUENCE [GENOMIC DNA]</scope>
    <scope>FUNCTION</scope>
</reference>
<reference key="2">
    <citation type="journal article" date="1994" name="Mol. Cell. Biol.">
        <authorList>
            <person name="Samejima I."/>
            <person name="Yanagida M."/>
        </authorList>
    </citation>
    <scope>ERRATUM OF PUBMED:8065367</scope>
</reference>
<reference key="3">
    <citation type="journal article" date="2002" name="Nature">
        <title>The genome sequence of Schizosaccharomyces pombe.</title>
        <authorList>
            <person name="Wood V."/>
            <person name="Gwilliam R."/>
            <person name="Rajandream M.A."/>
            <person name="Lyne M.H."/>
            <person name="Lyne R."/>
            <person name="Stewart A."/>
            <person name="Sgouros J.G."/>
            <person name="Peat N."/>
            <person name="Hayles J."/>
            <person name="Baker S.G."/>
            <person name="Basham D."/>
            <person name="Bowman S."/>
            <person name="Brooks K."/>
            <person name="Brown D."/>
            <person name="Brown S."/>
            <person name="Chillingworth T."/>
            <person name="Churcher C.M."/>
            <person name="Collins M."/>
            <person name="Connor R."/>
            <person name="Cronin A."/>
            <person name="Davis P."/>
            <person name="Feltwell T."/>
            <person name="Fraser A."/>
            <person name="Gentles S."/>
            <person name="Goble A."/>
            <person name="Hamlin N."/>
            <person name="Harris D.E."/>
            <person name="Hidalgo J."/>
            <person name="Hodgson G."/>
            <person name="Holroyd S."/>
            <person name="Hornsby T."/>
            <person name="Howarth S."/>
            <person name="Huckle E.J."/>
            <person name="Hunt S."/>
            <person name="Jagels K."/>
            <person name="James K.D."/>
            <person name="Jones L."/>
            <person name="Jones M."/>
            <person name="Leather S."/>
            <person name="McDonald S."/>
            <person name="McLean J."/>
            <person name="Mooney P."/>
            <person name="Moule S."/>
            <person name="Mungall K.L."/>
            <person name="Murphy L.D."/>
            <person name="Niblett D."/>
            <person name="Odell C."/>
            <person name="Oliver K."/>
            <person name="O'Neil S."/>
            <person name="Pearson D."/>
            <person name="Quail M.A."/>
            <person name="Rabbinowitsch E."/>
            <person name="Rutherford K.M."/>
            <person name="Rutter S."/>
            <person name="Saunders D."/>
            <person name="Seeger K."/>
            <person name="Sharp S."/>
            <person name="Skelton J."/>
            <person name="Simmonds M.N."/>
            <person name="Squares R."/>
            <person name="Squares S."/>
            <person name="Stevens K."/>
            <person name="Taylor K."/>
            <person name="Taylor R.G."/>
            <person name="Tivey A."/>
            <person name="Walsh S.V."/>
            <person name="Warren T."/>
            <person name="Whitehead S."/>
            <person name="Woodward J.R."/>
            <person name="Volckaert G."/>
            <person name="Aert R."/>
            <person name="Robben J."/>
            <person name="Grymonprez B."/>
            <person name="Weltjens I."/>
            <person name="Vanstreels E."/>
            <person name="Rieger M."/>
            <person name="Schaefer M."/>
            <person name="Mueller-Auer S."/>
            <person name="Gabel C."/>
            <person name="Fuchs M."/>
            <person name="Duesterhoeft A."/>
            <person name="Fritzc C."/>
            <person name="Holzer E."/>
            <person name="Moestl D."/>
            <person name="Hilbert H."/>
            <person name="Borzym K."/>
            <person name="Langer I."/>
            <person name="Beck A."/>
            <person name="Lehrach H."/>
            <person name="Reinhardt R."/>
            <person name="Pohl T.M."/>
            <person name="Eger P."/>
            <person name="Zimmermann W."/>
            <person name="Wedler H."/>
            <person name="Wambutt R."/>
            <person name="Purnelle B."/>
            <person name="Goffeau A."/>
            <person name="Cadieu E."/>
            <person name="Dreano S."/>
            <person name="Gloux S."/>
            <person name="Lelaure V."/>
            <person name="Mottier S."/>
            <person name="Galibert F."/>
            <person name="Aves S.J."/>
            <person name="Xiang Z."/>
            <person name="Hunt C."/>
            <person name="Moore K."/>
            <person name="Hurst S.M."/>
            <person name="Lucas M."/>
            <person name="Rochet M."/>
            <person name="Gaillardin C."/>
            <person name="Tallada V.A."/>
            <person name="Garzon A."/>
            <person name="Thode G."/>
            <person name="Daga R.R."/>
            <person name="Cruzado L."/>
            <person name="Jimenez J."/>
            <person name="Sanchez M."/>
            <person name="del Rey F."/>
            <person name="Benito J."/>
            <person name="Dominguez A."/>
            <person name="Revuelta J.L."/>
            <person name="Moreno S."/>
            <person name="Armstrong J."/>
            <person name="Forsburg S.L."/>
            <person name="Cerutti L."/>
            <person name="Lowe T."/>
            <person name="McCombie W.R."/>
            <person name="Paulsen I."/>
            <person name="Potashkin J."/>
            <person name="Shpakovski G.V."/>
            <person name="Ussery D."/>
            <person name="Barrell B.G."/>
            <person name="Nurse P."/>
        </authorList>
    </citation>
    <scope>NUCLEOTIDE SEQUENCE [LARGE SCALE GENOMIC DNA]</scope>
    <source>
        <strain>972 / ATCC 24843</strain>
    </source>
</reference>
<reference key="4">
    <citation type="journal article" date="2000" name="Curr. Biol.">
        <title>Cut8, essential for anaphase, controls localization of 26S proteasome, facilitating destruction of cyclin and Cut2.</title>
        <authorList>
            <person name="Tatebe H."/>
            <person name="Yanagida M."/>
        </authorList>
    </citation>
    <scope>FUNCTION</scope>
    <scope>SUBCELLULAR LOCATION</scope>
</reference>
<reference key="5">
    <citation type="journal article" date="2005" name="Cell">
        <title>Regulation of nuclear proteasome by Rhp6/Ubc2 through ubiquitination and destruction of the sensor and anchor Cut8.</title>
        <authorList>
            <person name="Takeda K."/>
            <person name="Yanagida M."/>
        </authorList>
    </citation>
    <scope>FUNCTION</scope>
    <scope>PROTEASOME-BINDING</scope>
    <scope>UBIQUITINATION</scope>
</reference>
<reference key="6">
    <citation type="journal article" date="2017" name="J. Cell Biol.">
        <title>The fission yeast nucleoporin Alm1 is required for proteasomal degradation of kinetochore components.</title>
        <authorList>
            <person name="Salas-Pino S."/>
            <person name="Gallardo P."/>
            <person name="Barrales R.R."/>
            <person name="Braun S."/>
            <person name="Daga R.R."/>
        </authorList>
    </citation>
    <scope>FUNCTION</scope>
    <scope>SUBCELLULAR LOCATION</scope>
</reference>
<protein>
    <recommendedName>
        <fullName>Tethering factor for nuclear proteasome cut8</fullName>
    </recommendedName>
    <alternativeName>
        <fullName>Cell untimely torn protein 8</fullName>
    </alternativeName>
</protein>
<keyword id="KW-0002">3D-structure</keyword>
<keyword id="KW-0539">Nucleus</keyword>
<keyword id="KW-1185">Reference proteome</keyword>
<keyword id="KW-0832">Ubl conjugation</keyword>